<protein>
    <recommendedName>
        <fullName evidence="1">Probable potassium transport system protein Kup 2</fullName>
    </recommendedName>
</protein>
<proteinExistence type="inferred from homology"/>
<gene>
    <name evidence="1" type="primary">kup2</name>
    <name type="ordered locus">GSU2485</name>
</gene>
<name>KUP2_GEOSL</name>
<reference key="1">
    <citation type="journal article" date="2003" name="Science">
        <title>Genome of Geobacter sulfurreducens: metal reduction in subsurface environments.</title>
        <authorList>
            <person name="Methe B.A."/>
            <person name="Nelson K.E."/>
            <person name="Eisen J.A."/>
            <person name="Paulsen I.T."/>
            <person name="Nelson W.C."/>
            <person name="Heidelberg J.F."/>
            <person name="Wu D."/>
            <person name="Wu M."/>
            <person name="Ward N.L."/>
            <person name="Beanan M.J."/>
            <person name="Dodson R.J."/>
            <person name="Madupu R."/>
            <person name="Brinkac L.M."/>
            <person name="Daugherty S.C."/>
            <person name="DeBoy R.T."/>
            <person name="Durkin A.S."/>
            <person name="Gwinn M.L."/>
            <person name="Kolonay J.F."/>
            <person name="Sullivan S.A."/>
            <person name="Haft D.H."/>
            <person name="Selengut J."/>
            <person name="Davidsen T.M."/>
            <person name="Zafar N."/>
            <person name="White O."/>
            <person name="Tran B."/>
            <person name="Romero C."/>
            <person name="Forberger H.A."/>
            <person name="Weidman J.F."/>
            <person name="Khouri H.M."/>
            <person name="Feldblyum T.V."/>
            <person name="Utterback T.R."/>
            <person name="Van Aken S.E."/>
            <person name="Lovley D.R."/>
            <person name="Fraser C.M."/>
        </authorList>
    </citation>
    <scope>NUCLEOTIDE SEQUENCE [LARGE SCALE GENOMIC DNA]</scope>
    <source>
        <strain>ATCC 51573 / DSM 12127 / PCA</strain>
    </source>
</reference>
<comment type="function">
    <text evidence="1">Transport of potassium into the cell. Likely operates as a K(+):H(+) symporter.</text>
</comment>
<comment type="catalytic activity">
    <reaction evidence="1">
        <text>K(+)(in) + H(+)(in) = K(+)(out) + H(+)(out)</text>
        <dbReference type="Rhea" id="RHEA:28490"/>
        <dbReference type="ChEBI" id="CHEBI:15378"/>
        <dbReference type="ChEBI" id="CHEBI:29103"/>
    </reaction>
    <physiologicalReaction direction="right-to-left" evidence="1">
        <dbReference type="Rhea" id="RHEA:28492"/>
    </physiologicalReaction>
</comment>
<comment type="subcellular location">
    <subcellularLocation>
        <location evidence="1">Cell inner membrane</location>
        <topology evidence="1">Multi-pass membrane protein</topology>
    </subcellularLocation>
</comment>
<comment type="similarity">
    <text evidence="1">Belongs to the HAK/KUP transporter (TC 2.A.72) family.</text>
</comment>
<evidence type="ECO:0000255" key="1">
    <source>
        <dbReference type="HAMAP-Rule" id="MF_01522"/>
    </source>
</evidence>
<accession>Q74AA5</accession>
<keyword id="KW-0997">Cell inner membrane</keyword>
<keyword id="KW-1003">Cell membrane</keyword>
<keyword id="KW-0406">Ion transport</keyword>
<keyword id="KW-0472">Membrane</keyword>
<keyword id="KW-0630">Potassium</keyword>
<keyword id="KW-0633">Potassium transport</keyword>
<keyword id="KW-1185">Reference proteome</keyword>
<keyword id="KW-0769">Symport</keyword>
<keyword id="KW-0812">Transmembrane</keyword>
<keyword id="KW-1133">Transmembrane helix</keyword>
<keyword id="KW-0813">Transport</keyword>
<feature type="chain" id="PRO_0000209017" description="Probable potassium transport system protein Kup 2">
    <location>
        <begin position="1"/>
        <end position="605"/>
    </location>
</feature>
<feature type="transmembrane region" description="Helical" evidence="1">
    <location>
        <begin position="17"/>
        <end position="37"/>
    </location>
</feature>
<feature type="transmembrane region" description="Helical" evidence="1">
    <location>
        <begin position="45"/>
        <end position="65"/>
    </location>
</feature>
<feature type="transmembrane region" description="Helical" evidence="1">
    <location>
        <begin position="96"/>
        <end position="116"/>
    </location>
</feature>
<feature type="transmembrane region" description="Helical" evidence="1">
    <location>
        <begin position="139"/>
        <end position="159"/>
    </location>
</feature>
<feature type="transmembrane region" description="Helical" evidence="1">
    <location>
        <begin position="169"/>
        <end position="189"/>
    </location>
</feature>
<feature type="transmembrane region" description="Helical" evidence="1">
    <location>
        <begin position="211"/>
        <end position="231"/>
    </location>
</feature>
<feature type="transmembrane region" description="Helical" evidence="1">
    <location>
        <begin position="246"/>
        <end position="266"/>
    </location>
</feature>
<feature type="transmembrane region" description="Helical" evidence="1">
    <location>
        <begin position="286"/>
        <end position="306"/>
    </location>
</feature>
<feature type="transmembrane region" description="Helical" evidence="1">
    <location>
        <begin position="338"/>
        <end position="358"/>
    </location>
</feature>
<feature type="transmembrane region" description="Helical" evidence="1">
    <location>
        <begin position="367"/>
        <end position="387"/>
    </location>
</feature>
<feature type="transmembrane region" description="Helical" evidence="1">
    <location>
        <begin position="394"/>
        <end position="414"/>
    </location>
</feature>
<feature type="transmembrane region" description="Helical" evidence="1">
    <location>
        <begin position="417"/>
        <end position="437"/>
    </location>
</feature>
<sequence>MKTEAQSYWGGIIKSMGLVFGDIGTSPIYTLTVIMTLTKPDAEHVLGILSLIVWTLIILVTVEYAWLAMSLGRKGEGGTIVLKEILIRLLKSGRQMAFAGFLAFLGVSLLLGDGVITPAISILSAVEGMRLIPGLEDLAQGGLILVAAVIAVFLFIFQFKGTDKVASAFGPIMVVWFSALTVSGLVSIIGTPTVVQAISPHHAVLFLKHNGLAGFFVLSEVILCATGGEALYADMGHLGRKPIIRAWYFVFCALVINYLGQGAFILRNPEAKNILFSMVKSQVPMLYIPFLLLTISATIIASQALISGVFSIVYQGITTRILPLMKVDYTSTHLKSQIYIGSVNWSLLVAVIFIMILFQRSENLAAAYGLAVTGTMFITGIMMTMIFSRTTKKWKVPIALAVTVIDFAYLTANLHKLPHGGYWSLVLASIPLAIMVIWTRGQRALYRSLKPLDLDTFLLSYEQIYAKGHNIPGTGLFFVRETPVVPPYVIHCIIRSNIIYERNVFVSLTRTDEPFDVRTKLTRGIGTGLDAFEVNAGYMERLDIEKLLKKHGVEEKVIFYGIEDIDTSNPVWRIFATIKRQSANFVQFNKLPVSKLQGVVTRVEM</sequence>
<dbReference type="EMBL" id="AE017180">
    <property type="protein sequence ID" value="AAR35858.1"/>
    <property type="molecule type" value="Genomic_DNA"/>
</dbReference>
<dbReference type="RefSeq" id="NP_953531.1">
    <property type="nucleotide sequence ID" value="NC_002939.5"/>
</dbReference>
<dbReference type="RefSeq" id="WP_010943122.1">
    <property type="nucleotide sequence ID" value="NC_002939.5"/>
</dbReference>
<dbReference type="STRING" id="243231.GSU2485"/>
<dbReference type="EnsemblBacteria" id="AAR35858">
    <property type="protein sequence ID" value="AAR35858"/>
    <property type="gene ID" value="GSU2485"/>
</dbReference>
<dbReference type="KEGG" id="gsu:GSU2485"/>
<dbReference type="PATRIC" id="fig|243231.5.peg.2511"/>
<dbReference type="eggNOG" id="COG3158">
    <property type="taxonomic scope" value="Bacteria"/>
</dbReference>
<dbReference type="HOGENOM" id="CLU_008142_4_2_7"/>
<dbReference type="InParanoid" id="Q74AA5"/>
<dbReference type="OrthoDB" id="9805577at2"/>
<dbReference type="Proteomes" id="UP000000577">
    <property type="component" value="Chromosome"/>
</dbReference>
<dbReference type="GO" id="GO:0016020">
    <property type="term" value="C:membrane"/>
    <property type="evidence" value="ECO:0000318"/>
    <property type="project" value="GO_Central"/>
</dbReference>
<dbReference type="GO" id="GO:0005886">
    <property type="term" value="C:plasma membrane"/>
    <property type="evidence" value="ECO:0007669"/>
    <property type="project" value="UniProtKB-SubCell"/>
</dbReference>
<dbReference type="GO" id="GO:0015079">
    <property type="term" value="F:potassium ion transmembrane transporter activity"/>
    <property type="evidence" value="ECO:0000318"/>
    <property type="project" value="GO_Central"/>
</dbReference>
<dbReference type="GO" id="GO:0015293">
    <property type="term" value="F:symporter activity"/>
    <property type="evidence" value="ECO:0007669"/>
    <property type="project" value="UniProtKB-UniRule"/>
</dbReference>
<dbReference type="GO" id="GO:0006813">
    <property type="term" value="P:potassium ion transport"/>
    <property type="evidence" value="ECO:0000318"/>
    <property type="project" value="GO_Central"/>
</dbReference>
<dbReference type="HAMAP" id="MF_01522">
    <property type="entry name" value="Kup"/>
    <property type="match status" value="1"/>
</dbReference>
<dbReference type="InterPro" id="IPR003855">
    <property type="entry name" value="K+_transporter"/>
</dbReference>
<dbReference type="InterPro" id="IPR053952">
    <property type="entry name" value="K_trans_C"/>
</dbReference>
<dbReference type="InterPro" id="IPR053951">
    <property type="entry name" value="K_trans_N"/>
</dbReference>
<dbReference type="InterPro" id="IPR023051">
    <property type="entry name" value="Kup"/>
</dbReference>
<dbReference type="PANTHER" id="PTHR30540:SF83">
    <property type="entry name" value="K+ POTASSIUM TRANSPORTER"/>
    <property type="match status" value="1"/>
</dbReference>
<dbReference type="PANTHER" id="PTHR30540">
    <property type="entry name" value="OSMOTIC STRESS POTASSIUM TRANSPORTER"/>
    <property type="match status" value="1"/>
</dbReference>
<dbReference type="Pfam" id="PF02705">
    <property type="entry name" value="K_trans"/>
    <property type="match status" value="1"/>
</dbReference>
<dbReference type="Pfam" id="PF22776">
    <property type="entry name" value="K_trans_C"/>
    <property type="match status" value="1"/>
</dbReference>
<organism>
    <name type="scientific">Geobacter sulfurreducens (strain ATCC 51573 / DSM 12127 / PCA)</name>
    <dbReference type="NCBI Taxonomy" id="243231"/>
    <lineage>
        <taxon>Bacteria</taxon>
        <taxon>Pseudomonadati</taxon>
        <taxon>Thermodesulfobacteriota</taxon>
        <taxon>Desulfuromonadia</taxon>
        <taxon>Geobacterales</taxon>
        <taxon>Geobacteraceae</taxon>
        <taxon>Geobacter</taxon>
    </lineage>
</organism>